<comment type="subcellular location">
    <subcellularLocation>
        <location evidence="2">Cytoplasm</location>
    </subcellularLocation>
    <subcellularLocation>
        <location evidence="2">Nucleus</location>
    </subcellularLocation>
</comment>
<reference key="1">
    <citation type="journal article" date="2000" name="Yeast">
        <title>A 38 kb segment containing the cdc2 gene from the left arm of fission yeast chromosome II: sequence analysis and characterization of the genomic DNA and cDNAs encoded on the segment.</title>
        <authorList>
            <person name="Machida M."/>
            <person name="Yamazaki S."/>
            <person name="Kunihiro S."/>
            <person name="Tanaka T."/>
            <person name="Kushida N."/>
            <person name="Jinno K."/>
            <person name="Haikawa Y."/>
            <person name="Yamazaki J."/>
            <person name="Yamamoto S."/>
            <person name="Sekine M."/>
            <person name="Oguchi A."/>
            <person name="Nagai Y."/>
            <person name="Sakai M."/>
            <person name="Aoki K."/>
            <person name="Ogura K."/>
            <person name="Kudoh Y."/>
            <person name="Kikuchi H."/>
            <person name="Zhang M.Q."/>
            <person name="Yanagida M."/>
        </authorList>
    </citation>
    <scope>NUCLEOTIDE SEQUENCE [LARGE SCALE GENOMIC DNA]</scope>
    <source>
        <strain>972 / ATCC 24843</strain>
    </source>
</reference>
<reference key="2">
    <citation type="journal article" date="2002" name="Nature">
        <title>The genome sequence of Schizosaccharomyces pombe.</title>
        <authorList>
            <person name="Wood V."/>
            <person name="Gwilliam R."/>
            <person name="Rajandream M.A."/>
            <person name="Lyne M.H."/>
            <person name="Lyne R."/>
            <person name="Stewart A."/>
            <person name="Sgouros J.G."/>
            <person name="Peat N."/>
            <person name="Hayles J."/>
            <person name="Baker S.G."/>
            <person name="Basham D."/>
            <person name="Bowman S."/>
            <person name="Brooks K."/>
            <person name="Brown D."/>
            <person name="Brown S."/>
            <person name="Chillingworth T."/>
            <person name="Churcher C.M."/>
            <person name="Collins M."/>
            <person name="Connor R."/>
            <person name="Cronin A."/>
            <person name="Davis P."/>
            <person name="Feltwell T."/>
            <person name="Fraser A."/>
            <person name="Gentles S."/>
            <person name="Goble A."/>
            <person name="Hamlin N."/>
            <person name="Harris D.E."/>
            <person name="Hidalgo J."/>
            <person name="Hodgson G."/>
            <person name="Holroyd S."/>
            <person name="Hornsby T."/>
            <person name="Howarth S."/>
            <person name="Huckle E.J."/>
            <person name="Hunt S."/>
            <person name="Jagels K."/>
            <person name="James K.D."/>
            <person name="Jones L."/>
            <person name="Jones M."/>
            <person name="Leather S."/>
            <person name="McDonald S."/>
            <person name="McLean J."/>
            <person name="Mooney P."/>
            <person name="Moule S."/>
            <person name="Mungall K.L."/>
            <person name="Murphy L.D."/>
            <person name="Niblett D."/>
            <person name="Odell C."/>
            <person name="Oliver K."/>
            <person name="O'Neil S."/>
            <person name="Pearson D."/>
            <person name="Quail M.A."/>
            <person name="Rabbinowitsch E."/>
            <person name="Rutherford K.M."/>
            <person name="Rutter S."/>
            <person name="Saunders D."/>
            <person name="Seeger K."/>
            <person name="Sharp S."/>
            <person name="Skelton J."/>
            <person name="Simmonds M.N."/>
            <person name="Squares R."/>
            <person name="Squares S."/>
            <person name="Stevens K."/>
            <person name="Taylor K."/>
            <person name="Taylor R.G."/>
            <person name="Tivey A."/>
            <person name="Walsh S.V."/>
            <person name="Warren T."/>
            <person name="Whitehead S."/>
            <person name="Woodward J.R."/>
            <person name="Volckaert G."/>
            <person name="Aert R."/>
            <person name="Robben J."/>
            <person name="Grymonprez B."/>
            <person name="Weltjens I."/>
            <person name="Vanstreels E."/>
            <person name="Rieger M."/>
            <person name="Schaefer M."/>
            <person name="Mueller-Auer S."/>
            <person name="Gabel C."/>
            <person name="Fuchs M."/>
            <person name="Duesterhoeft A."/>
            <person name="Fritzc C."/>
            <person name="Holzer E."/>
            <person name="Moestl D."/>
            <person name="Hilbert H."/>
            <person name="Borzym K."/>
            <person name="Langer I."/>
            <person name="Beck A."/>
            <person name="Lehrach H."/>
            <person name="Reinhardt R."/>
            <person name="Pohl T.M."/>
            <person name="Eger P."/>
            <person name="Zimmermann W."/>
            <person name="Wedler H."/>
            <person name="Wambutt R."/>
            <person name="Purnelle B."/>
            <person name="Goffeau A."/>
            <person name="Cadieu E."/>
            <person name="Dreano S."/>
            <person name="Gloux S."/>
            <person name="Lelaure V."/>
            <person name="Mottier S."/>
            <person name="Galibert F."/>
            <person name="Aves S.J."/>
            <person name="Xiang Z."/>
            <person name="Hunt C."/>
            <person name="Moore K."/>
            <person name="Hurst S.M."/>
            <person name="Lucas M."/>
            <person name="Rochet M."/>
            <person name="Gaillardin C."/>
            <person name="Tallada V.A."/>
            <person name="Garzon A."/>
            <person name="Thode G."/>
            <person name="Daga R.R."/>
            <person name="Cruzado L."/>
            <person name="Jimenez J."/>
            <person name="Sanchez M."/>
            <person name="del Rey F."/>
            <person name="Benito J."/>
            <person name="Dominguez A."/>
            <person name="Revuelta J.L."/>
            <person name="Moreno S."/>
            <person name="Armstrong J."/>
            <person name="Forsburg S.L."/>
            <person name="Cerutti L."/>
            <person name="Lowe T."/>
            <person name="McCombie W.R."/>
            <person name="Paulsen I."/>
            <person name="Potashkin J."/>
            <person name="Shpakovski G.V."/>
            <person name="Ussery D."/>
            <person name="Barrell B.G."/>
            <person name="Nurse P."/>
        </authorList>
    </citation>
    <scope>NUCLEOTIDE SEQUENCE [LARGE SCALE GENOMIC DNA]</scope>
    <source>
        <strain>972 / ATCC 24843</strain>
    </source>
</reference>
<reference key="3">
    <citation type="journal article" date="2006" name="Nat. Biotechnol.">
        <title>ORFeome cloning and global analysis of protein localization in the fission yeast Schizosaccharomyces pombe.</title>
        <authorList>
            <person name="Matsuyama A."/>
            <person name="Arai R."/>
            <person name="Yashiroda Y."/>
            <person name="Shirai A."/>
            <person name="Kamata A."/>
            <person name="Sekido S."/>
            <person name="Kobayashi Y."/>
            <person name="Hashimoto A."/>
            <person name="Hamamoto M."/>
            <person name="Hiraoka Y."/>
            <person name="Horinouchi S."/>
            <person name="Yoshida M."/>
        </authorList>
    </citation>
    <scope>SUBCELLULAR LOCATION [LARGE SCALE ANALYSIS]</scope>
</reference>
<proteinExistence type="predicted"/>
<protein>
    <recommendedName>
        <fullName>WW domain-containing protein C11B10.08</fullName>
    </recommendedName>
</protein>
<sequence>MAYQTREGLPNGWVAQWDERYKCYFYVNESDPKAKPQWECPVRGLTIPPPPSVDHSAPPSGPPPSYSNSAAPATPAASASSAAPAPAPAASQNRAYGAAPQPYPPQGGYPQQPYYYPNQPNYYPAQPAYAQPVYAQPATSARRGRSGVLSNPMVTGLGGLLVGGLAMHEMDEAFDRPEEVVYVDDNNYNNFDDYGGNDFGNDFF</sequence>
<feature type="chain" id="PRO_0000358322" description="WW domain-containing protein C11B10.08">
    <location>
        <begin position="1"/>
        <end position="204"/>
    </location>
</feature>
<feature type="domain" description="WW">
    <location>
        <begin position="7"/>
        <end position="43"/>
    </location>
</feature>
<feature type="region of interest" description="Disordered" evidence="1">
    <location>
        <begin position="32"/>
        <end position="117"/>
    </location>
</feature>
<feature type="compositionally biased region" description="Low complexity" evidence="1">
    <location>
        <begin position="66"/>
        <end position="100"/>
    </location>
</feature>
<feature type="compositionally biased region" description="Low complexity" evidence="1">
    <location>
        <begin position="108"/>
        <end position="117"/>
    </location>
</feature>
<keyword id="KW-0963">Cytoplasm</keyword>
<keyword id="KW-0539">Nucleus</keyword>
<keyword id="KW-1185">Reference proteome</keyword>
<evidence type="ECO:0000256" key="1">
    <source>
        <dbReference type="SAM" id="MobiDB-lite"/>
    </source>
</evidence>
<evidence type="ECO:0000269" key="2">
    <source>
    </source>
</evidence>
<accession>O13598</accession>
<dbReference type="EMBL" id="AB004534">
    <property type="protein sequence ID" value="BAA21380.1"/>
    <property type="molecule type" value="Genomic_DNA"/>
</dbReference>
<dbReference type="EMBL" id="CU329671">
    <property type="protein sequence ID" value="CAC37512.1"/>
    <property type="molecule type" value="Genomic_DNA"/>
</dbReference>
<dbReference type="SMR" id="O13598"/>
<dbReference type="BioGRID" id="276420">
    <property type="interactions" value="76"/>
</dbReference>
<dbReference type="FunCoup" id="O13598">
    <property type="interactions" value="41"/>
</dbReference>
<dbReference type="STRING" id="284812.O13598"/>
<dbReference type="PaxDb" id="4896-SPBC11B10.08.1"/>
<dbReference type="EnsemblFungi" id="SPBC11B10.08.1">
    <property type="protein sequence ID" value="SPBC11B10.08.1:pep"/>
    <property type="gene ID" value="SPBC11B10.08"/>
</dbReference>
<dbReference type="KEGG" id="spo:2539874"/>
<dbReference type="PomBase" id="SPBC11B10.08"/>
<dbReference type="VEuPathDB" id="FungiDB:SPBC11B10.08"/>
<dbReference type="HOGENOM" id="CLU_091402_1_0_1"/>
<dbReference type="InParanoid" id="O13598"/>
<dbReference type="OMA" id="NAYQNGF"/>
<dbReference type="PRO" id="PR:O13598"/>
<dbReference type="Proteomes" id="UP000002485">
    <property type="component" value="Chromosome II"/>
</dbReference>
<dbReference type="GO" id="GO:0005829">
    <property type="term" value="C:cytosol"/>
    <property type="evidence" value="ECO:0007005"/>
    <property type="project" value="PomBase"/>
</dbReference>
<dbReference type="GO" id="GO:0005634">
    <property type="term" value="C:nucleus"/>
    <property type="evidence" value="ECO:0007005"/>
    <property type="project" value="PomBase"/>
</dbReference>
<dbReference type="CDD" id="cd00201">
    <property type="entry name" value="WW"/>
    <property type="match status" value="1"/>
</dbReference>
<dbReference type="InterPro" id="IPR001202">
    <property type="entry name" value="WW_dom"/>
</dbReference>
<dbReference type="InterPro" id="IPR036020">
    <property type="entry name" value="WW_dom_sf"/>
</dbReference>
<dbReference type="SMART" id="SM00456">
    <property type="entry name" value="WW"/>
    <property type="match status" value="1"/>
</dbReference>
<dbReference type="SUPFAM" id="SSF51045">
    <property type="entry name" value="WW domain"/>
    <property type="match status" value="1"/>
</dbReference>
<name>YNI8_SCHPO</name>
<organism>
    <name type="scientific">Schizosaccharomyces pombe (strain 972 / ATCC 24843)</name>
    <name type="common">Fission yeast</name>
    <dbReference type="NCBI Taxonomy" id="284812"/>
    <lineage>
        <taxon>Eukaryota</taxon>
        <taxon>Fungi</taxon>
        <taxon>Dikarya</taxon>
        <taxon>Ascomycota</taxon>
        <taxon>Taphrinomycotina</taxon>
        <taxon>Schizosaccharomycetes</taxon>
        <taxon>Schizosaccharomycetales</taxon>
        <taxon>Schizosaccharomycetaceae</taxon>
        <taxon>Schizosaccharomyces</taxon>
    </lineage>
</organism>
<gene>
    <name type="ORF">pi003</name>
    <name type="ORF">SPACTOKYO_453.33c</name>
    <name type="ORF">SPBC11B10.08</name>
</gene>